<protein>
    <recommendedName>
        <fullName>E3 SUMO-protein ligase PIAS3</fullName>
        <ecNumber>2.3.2.-</ecNumber>
    </recommendedName>
    <alternativeName>
        <fullName evidence="9">E3 SUMO-protein transferase PIAS3</fullName>
    </alternativeName>
    <alternativeName>
        <fullName>KChAP</fullName>
    </alternativeName>
    <alternativeName>
        <fullName>Potassium channel-associated protein</fullName>
    </alternativeName>
    <alternativeName>
        <fullName>Protein inhibitor of activated STAT protein 3</fullName>
    </alternativeName>
</protein>
<comment type="function">
    <text evidence="2 3">Functions as an E3-type small ubiquitin-like modifier (SUMO) ligase, stabilizing the interaction between UBE2I and the substrate, and as a SUMO-tethering factor. Plays a crucial role as a transcriptional coregulation in various cellular pathways, including the STAT pathway and the steroid hormone signaling pathway. The effects of this transcriptional coregulation, transactivation or silencing, may vary depending upon the biological context. Enhances the sumoylation of MTA1 and may participate in its paralog-selective sumoylation. Sumoylates CCAR2 which promotes its interaction with SIRT1. Diminishes the sumoylation of ZFHX3 by preventing the colocalization of ZFHX3 with SUMO1 in the nucleus (By similarity).</text>
</comment>
<comment type="pathway">
    <text>Protein modification; protein sumoylation.</text>
</comment>
<comment type="subunit">
    <text evidence="2 3">Binds SUMO1 and UBE2I. Interacts with AR, BCL11A, GFI1, HMGA2, IRF1, MITF, NCOA2, as well as with STAT3, after treatment with IL6, CNTF or OSM and with STAT5, after PRL stimulation. Interacts with PLAG1 (By similarity). Interacts with ZFHX3. Interacts with MTA1. Interacts with CCAR2 (via N-terminus) (By similarity). Interacts with TRIM8 (By similarity). Interacts with PRDM1 (By similarity).</text>
</comment>
<comment type="interaction">
    <interactant intactId="EBI-7974636">
        <id>O70260</id>
    </interactant>
    <interactant intactId="EBI-7809795">
        <id>P42260</id>
        <label>Grik2</label>
    </interactant>
    <organismsDiffer>false</organismsDiffer>
    <experiments>3</experiments>
</comment>
<comment type="subcellular location">
    <subcellularLocation>
        <location evidence="2">Cytoplasm</location>
    </subcellularLocation>
    <subcellularLocation>
        <location evidence="8">Nucleus</location>
    </subcellularLocation>
    <subcellularLocation>
        <location evidence="2">Nucleus speckle</location>
    </subcellularLocation>
    <text evidence="2">Colocalizes with MITF in the nucleus. Colocalizes with GFI1 in nuclear dots. Colocalizes with SUMO1 in nuclear granules.</text>
</comment>
<comment type="tissue specificity">
    <text evidence="8">Widely expressed, with highest levels in lung, kidney and spleen.</text>
</comment>
<comment type="domain">
    <text>The LXXLL motif is a transcriptional coregulator signature.</text>
</comment>
<comment type="PTM">
    <text evidence="1">Sumoylated.</text>
</comment>
<comment type="similarity">
    <text evidence="9">Belongs to the PIAS family.</text>
</comment>
<comment type="caution">
    <text evidence="9">Has been shown to interact with voltage-gated potassium channels, including the KCNB1 subunit, and to be critical for current enhancement. However, in view of its mostly nuclear subcellular location and its established function as a transcriptional coregulator, promoting the sumoylation of several transcription factors, the effect on potassium channels awaits further experimental confirmation.</text>
</comment>
<proteinExistence type="evidence at protein level"/>
<keyword id="KW-0963">Cytoplasm</keyword>
<keyword id="KW-1017">Isopeptide bond</keyword>
<keyword id="KW-0479">Metal-binding</keyword>
<keyword id="KW-0539">Nucleus</keyword>
<keyword id="KW-1185">Reference proteome</keyword>
<keyword id="KW-0804">Transcription</keyword>
<keyword id="KW-0805">Transcription regulation</keyword>
<keyword id="KW-0808">Transferase</keyword>
<keyword id="KW-0832">Ubl conjugation</keyword>
<keyword id="KW-0833">Ubl conjugation pathway</keyword>
<keyword id="KW-0862">Zinc</keyword>
<keyword id="KW-0863">Zinc-finger</keyword>
<sequence length="628" mass="68364">MAELGELKHMVMSFRVSELQVLLGFAGRNKSGRKHELLAKALHLLKSSCAPSVQMKIKELYRRRFPRKTLGPSDLSLLSLPPGTSPVGSPSPLASIPPTLLTPGTLLGPKREVDMHPPLPQPVHPDVTMKPLPFYEVYGELIRPTTLASTSSQRFEEAHFTFALTPQQLQQILTSREVLPGAKCDYTIQVQLRFCLCETSCPQEDYFPPNLFVKVNGKLCPLPGYLPPTKNGAEPKRPSRPINITPLARLSATVPNTIVVNWSSEFGRNYSLSVYLVRQLTAGTLLQKLRAKGIRNPDHSRALIKEKLTADPDSEVATTSLRVSLMCPLGKMRLTVPCRALTCAHLQSFDAALYLQMNEKKPTWTCPVCDKKAPYESLIIDGLFMEILNSCSDCDEIQFMEDGSWCPMKPKKEASEVCPPPGYGLDGLQYSPVQEGNQSENKKRVEVIDLTIESSSDEEDLPPTKKHCPVTSAAIPALPGSKGALTSGHQPSSVLRSPAMGTLGSDFLSSLPLHEYPPAFPLGADIQGLDLFSFLQTESQHYSPSVITSLDEQDTLGHFFQFRGTPPHFLGPLAPTLGSSHRSATPAPAPGRVSSIVAPGSSLREGHGGPLPSGPSLTGCRSDVISLD</sequence>
<evidence type="ECO:0000250" key="1"/>
<evidence type="ECO:0000250" key="2">
    <source>
        <dbReference type="UniProtKB" id="O54714"/>
    </source>
</evidence>
<evidence type="ECO:0000250" key="3">
    <source>
        <dbReference type="UniProtKB" id="Q9Y6X2"/>
    </source>
</evidence>
<evidence type="ECO:0000255" key="4">
    <source>
        <dbReference type="PROSITE-ProRule" id="PRU00186"/>
    </source>
</evidence>
<evidence type="ECO:0000255" key="5">
    <source>
        <dbReference type="PROSITE-ProRule" id="PRU00452"/>
    </source>
</evidence>
<evidence type="ECO:0000255" key="6">
    <source>
        <dbReference type="PROSITE-ProRule" id="PRU00799"/>
    </source>
</evidence>
<evidence type="ECO:0000256" key="7">
    <source>
        <dbReference type="SAM" id="MobiDB-lite"/>
    </source>
</evidence>
<evidence type="ECO:0000269" key="8">
    <source>
    </source>
</evidence>
<evidence type="ECO:0000305" key="9"/>
<name>PIAS3_RAT</name>
<dbReference type="EC" id="2.3.2.-"/>
<dbReference type="EMBL" id="AF032872">
    <property type="protein sequence ID" value="AAC40114.4"/>
    <property type="molecule type" value="mRNA"/>
</dbReference>
<dbReference type="RefSeq" id="NP_113972.2">
    <property type="nucleotide sequence ID" value="NM_031784.2"/>
</dbReference>
<dbReference type="SMR" id="O70260"/>
<dbReference type="BioGRID" id="249779">
    <property type="interactions" value="1"/>
</dbReference>
<dbReference type="CORUM" id="O70260"/>
<dbReference type="DIP" id="DIP-47656N"/>
<dbReference type="FunCoup" id="O70260">
    <property type="interactions" value="3683"/>
</dbReference>
<dbReference type="IntAct" id="O70260">
    <property type="interactions" value="4"/>
</dbReference>
<dbReference type="MINT" id="O70260"/>
<dbReference type="STRING" id="10116.ENSRNOP00000028814"/>
<dbReference type="TCDB" id="8.A.15.1.1">
    <property type="family name" value="the k(+) channel accessory protein (kchap) family"/>
</dbReference>
<dbReference type="iPTMnet" id="O70260"/>
<dbReference type="PhosphoSitePlus" id="O70260"/>
<dbReference type="PaxDb" id="10116-ENSRNOP00000028814"/>
<dbReference type="GeneID" id="83614"/>
<dbReference type="KEGG" id="rno:83614"/>
<dbReference type="UCSC" id="RGD:708413">
    <property type="organism name" value="rat"/>
</dbReference>
<dbReference type="AGR" id="RGD:708413"/>
<dbReference type="CTD" id="10401"/>
<dbReference type="RGD" id="708413">
    <property type="gene designation" value="Pias3"/>
</dbReference>
<dbReference type="VEuPathDB" id="HostDB:ENSRNOG00000021218"/>
<dbReference type="eggNOG" id="KOG2169">
    <property type="taxonomic scope" value="Eukaryota"/>
</dbReference>
<dbReference type="InParanoid" id="O70260"/>
<dbReference type="OrthoDB" id="10263264at2759"/>
<dbReference type="PhylomeDB" id="O70260"/>
<dbReference type="TreeFam" id="TF323787"/>
<dbReference type="Reactome" id="R-RNO-3232118">
    <property type="pathway name" value="SUMOylation of transcription factors"/>
</dbReference>
<dbReference type="Reactome" id="R-RNO-3899300">
    <property type="pathway name" value="SUMOylation of transcription cofactors"/>
</dbReference>
<dbReference type="Reactome" id="R-RNO-4090294">
    <property type="pathway name" value="SUMOylation of intracellular receptors"/>
</dbReference>
<dbReference type="Reactome" id="R-RNO-4615885">
    <property type="pathway name" value="SUMOylation of DNA replication proteins"/>
</dbReference>
<dbReference type="Reactome" id="R-RNO-4755510">
    <property type="pathway name" value="SUMOylation of immune response proteins"/>
</dbReference>
<dbReference type="Reactome" id="R-RNO-5696395">
    <property type="pathway name" value="Formation of Incision Complex in GG-NER"/>
</dbReference>
<dbReference type="UniPathway" id="UPA00886"/>
<dbReference type="PRO" id="PR:O70260"/>
<dbReference type="Proteomes" id="UP000002494">
    <property type="component" value="Chromosome 2"/>
</dbReference>
<dbReference type="Bgee" id="ENSRNOG00000021218">
    <property type="expression patterns" value="Expressed in pancreas and 20 other cell types or tissues"/>
</dbReference>
<dbReference type="ExpressionAtlas" id="O70260">
    <property type="expression patterns" value="baseline and differential"/>
</dbReference>
<dbReference type="GO" id="GO:0000785">
    <property type="term" value="C:chromatin"/>
    <property type="evidence" value="ECO:0000318"/>
    <property type="project" value="GO_Central"/>
</dbReference>
<dbReference type="GO" id="GO:0005737">
    <property type="term" value="C:cytoplasm"/>
    <property type="evidence" value="ECO:0000266"/>
    <property type="project" value="RGD"/>
</dbReference>
<dbReference type="GO" id="GO:0030425">
    <property type="term" value="C:dendrite"/>
    <property type="evidence" value="ECO:0000314"/>
    <property type="project" value="RGD"/>
</dbReference>
<dbReference type="GO" id="GO:0098978">
    <property type="term" value="C:glutamatergic synapse"/>
    <property type="evidence" value="ECO:0000266"/>
    <property type="project" value="RGD"/>
</dbReference>
<dbReference type="GO" id="GO:0016607">
    <property type="term" value="C:nuclear speck"/>
    <property type="evidence" value="ECO:0007669"/>
    <property type="project" value="UniProtKB-SubCell"/>
</dbReference>
<dbReference type="GO" id="GO:0005634">
    <property type="term" value="C:nucleus"/>
    <property type="evidence" value="ECO:0000266"/>
    <property type="project" value="RGD"/>
</dbReference>
<dbReference type="GO" id="GO:0099524">
    <property type="term" value="C:postsynaptic cytosol"/>
    <property type="evidence" value="ECO:0000266"/>
    <property type="project" value="RGD"/>
</dbReference>
<dbReference type="GO" id="GO:0099523">
    <property type="term" value="C:presynaptic cytosol"/>
    <property type="evidence" value="ECO:0000266"/>
    <property type="project" value="RGD"/>
</dbReference>
<dbReference type="GO" id="GO:0035255">
    <property type="term" value="F:ionotropic glutamate receptor binding"/>
    <property type="evidence" value="ECO:0000353"/>
    <property type="project" value="RGD"/>
</dbReference>
<dbReference type="GO" id="GO:0051059">
    <property type="term" value="F:NF-kappaB binding"/>
    <property type="evidence" value="ECO:0000266"/>
    <property type="project" value="RGD"/>
</dbReference>
<dbReference type="GO" id="GO:0015459">
    <property type="term" value="F:potassium channel regulator activity"/>
    <property type="evidence" value="ECO:0000314"/>
    <property type="project" value="RGD"/>
</dbReference>
<dbReference type="GO" id="GO:0061665">
    <property type="term" value="F:SUMO ligase activity"/>
    <property type="evidence" value="ECO:0000318"/>
    <property type="project" value="GO_Central"/>
</dbReference>
<dbReference type="GO" id="GO:0019789">
    <property type="term" value="F:SUMO transferase activity"/>
    <property type="evidence" value="ECO:0000266"/>
    <property type="project" value="RGD"/>
</dbReference>
<dbReference type="GO" id="GO:0003712">
    <property type="term" value="F:transcription coregulator activity"/>
    <property type="evidence" value="ECO:0000318"/>
    <property type="project" value="GO_Central"/>
</dbReference>
<dbReference type="GO" id="GO:0044325">
    <property type="term" value="F:transmembrane transporter binding"/>
    <property type="evidence" value="ECO:0000314"/>
    <property type="project" value="RGD"/>
</dbReference>
<dbReference type="GO" id="GO:0008270">
    <property type="term" value="F:zinc ion binding"/>
    <property type="evidence" value="ECO:0007669"/>
    <property type="project" value="UniProtKB-KW"/>
</dbReference>
<dbReference type="GO" id="GO:0045892">
    <property type="term" value="P:negative regulation of DNA-templated transcription"/>
    <property type="evidence" value="ECO:0000266"/>
    <property type="project" value="RGD"/>
</dbReference>
<dbReference type="GO" id="GO:0010629">
    <property type="term" value="P:negative regulation of gene expression"/>
    <property type="evidence" value="ECO:0000266"/>
    <property type="project" value="RGD"/>
</dbReference>
<dbReference type="GO" id="GO:0045671">
    <property type="term" value="P:negative regulation of osteoclast differentiation"/>
    <property type="evidence" value="ECO:0000266"/>
    <property type="project" value="RGD"/>
</dbReference>
<dbReference type="GO" id="GO:0033234">
    <property type="term" value="P:negative regulation of protein sumoylation"/>
    <property type="evidence" value="ECO:0000250"/>
    <property type="project" value="UniProtKB"/>
</dbReference>
<dbReference type="GO" id="GO:0000122">
    <property type="term" value="P:negative regulation of transcription by RNA polymerase II"/>
    <property type="evidence" value="ECO:0000266"/>
    <property type="project" value="RGD"/>
</dbReference>
<dbReference type="GO" id="GO:0010628">
    <property type="term" value="P:positive regulation of gene expression"/>
    <property type="evidence" value="ECO:0000314"/>
    <property type="project" value="RGD"/>
</dbReference>
<dbReference type="GO" id="GO:0045838">
    <property type="term" value="P:positive regulation of membrane potential"/>
    <property type="evidence" value="ECO:0000314"/>
    <property type="project" value="RGD"/>
</dbReference>
<dbReference type="GO" id="GO:0033235">
    <property type="term" value="P:positive regulation of protein sumoylation"/>
    <property type="evidence" value="ECO:0000266"/>
    <property type="project" value="RGD"/>
</dbReference>
<dbReference type="GO" id="GO:0016925">
    <property type="term" value="P:protein sumoylation"/>
    <property type="evidence" value="ECO:0000250"/>
    <property type="project" value="UniProtKB"/>
</dbReference>
<dbReference type="GO" id="GO:0006357">
    <property type="term" value="P:regulation of transcription by RNA polymerase II"/>
    <property type="evidence" value="ECO:0000318"/>
    <property type="project" value="GO_Central"/>
</dbReference>
<dbReference type="GO" id="GO:0010803">
    <property type="term" value="P:regulation of tumor necrosis factor-mediated signaling pathway"/>
    <property type="evidence" value="ECO:0000266"/>
    <property type="project" value="RGD"/>
</dbReference>
<dbReference type="GO" id="GO:0009725">
    <property type="term" value="P:response to hormone"/>
    <property type="evidence" value="ECO:0000270"/>
    <property type="project" value="RGD"/>
</dbReference>
<dbReference type="CDD" id="cd16820">
    <property type="entry name" value="SP-RING_PIAS3"/>
    <property type="match status" value="1"/>
</dbReference>
<dbReference type="FunFam" id="1.10.720.30:FF:000001">
    <property type="entry name" value="E3 SUMO-protein ligase PIAS2 isoform 1"/>
    <property type="match status" value="1"/>
</dbReference>
<dbReference type="FunFam" id="2.60.120.780:FF:000001">
    <property type="entry name" value="E3 SUMO-protein ligase PIAS2 isoform X1"/>
    <property type="match status" value="1"/>
</dbReference>
<dbReference type="FunFam" id="3.30.40.10:FF:000003">
    <property type="entry name" value="E3 SUMO-protein ligase PIAS2 isoform X1"/>
    <property type="match status" value="1"/>
</dbReference>
<dbReference type="Gene3D" id="2.60.120.780">
    <property type="entry name" value="PINIT domain"/>
    <property type="match status" value="1"/>
</dbReference>
<dbReference type="Gene3D" id="1.10.720.30">
    <property type="entry name" value="SAP domain"/>
    <property type="match status" value="1"/>
</dbReference>
<dbReference type="Gene3D" id="3.30.40.10">
    <property type="entry name" value="Zinc/RING finger domain, C3HC4 (zinc finger)"/>
    <property type="match status" value="1"/>
</dbReference>
<dbReference type="InterPro" id="IPR023321">
    <property type="entry name" value="PINIT"/>
</dbReference>
<dbReference type="InterPro" id="IPR038654">
    <property type="entry name" value="PINIT_sf"/>
</dbReference>
<dbReference type="InterPro" id="IPR003034">
    <property type="entry name" value="SAP_dom"/>
</dbReference>
<dbReference type="InterPro" id="IPR036361">
    <property type="entry name" value="SAP_dom_sf"/>
</dbReference>
<dbReference type="InterPro" id="IPR004181">
    <property type="entry name" value="Znf_MIZ"/>
</dbReference>
<dbReference type="InterPro" id="IPR013083">
    <property type="entry name" value="Znf_RING/FYVE/PHD"/>
</dbReference>
<dbReference type="PANTHER" id="PTHR10782:SF10">
    <property type="entry name" value="E3 SUMO-PROTEIN LIGASE PIAS3"/>
    <property type="match status" value="1"/>
</dbReference>
<dbReference type="PANTHER" id="PTHR10782">
    <property type="entry name" value="ZINC FINGER MIZ DOMAIN-CONTAINING PROTEIN"/>
    <property type="match status" value="1"/>
</dbReference>
<dbReference type="Pfam" id="PF14324">
    <property type="entry name" value="PINIT"/>
    <property type="match status" value="1"/>
</dbReference>
<dbReference type="Pfam" id="PF02037">
    <property type="entry name" value="SAP"/>
    <property type="match status" value="1"/>
</dbReference>
<dbReference type="Pfam" id="PF02891">
    <property type="entry name" value="zf-MIZ"/>
    <property type="match status" value="1"/>
</dbReference>
<dbReference type="SMART" id="SM00513">
    <property type="entry name" value="SAP"/>
    <property type="match status" value="1"/>
</dbReference>
<dbReference type="SUPFAM" id="SSF68906">
    <property type="entry name" value="SAP domain"/>
    <property type="match status" value="1"/>
</dbReference>
<dbReference type="PROSITE" id="PS51466">
    <property type="entry name" value="PINIT"/>
    <property type="match status" value="1"/>
</dbReference>
<dbReference type="PROSITE" id="PS50800">
    <property type="entry name" value="SAP"/>
    <property type="match status" value="1"/>
</dbReference>
<dbReference type="PROSITE" id="PS51044">
    <property type="entry name" value="ZF_SP_RING"/>
    <property type="match status" value="1"/>
</dbReference>
<feature type="chain" id="PRO_0000218981" description="E3 SUMO-protein ligase PIAS3">
    <location>
        <begin position="1"/>
        <end position="628"/>
    </location>
</feature>
<feature type="domain" description="SAP" evidence="4">
    <location>
        <begin position="11"/>
        <end position="45"/>
    </location>
</feature>
<feature type="domain" description="PINIT" evidence="6">
    <location>
        <begin position="115"/>
        <end position="280"/>
    </location>
</feature>
<feature type="zinc finger region" description="SP-RING-type" evidence="5">
    <location>
        <begin position="312"/>
        <end position="393"/>
    </location>
</feature>
<feature type="region of interest" description="Interaction with CCAR2" evidence="3">
    <location>
        <begin position="1"/>
        <end position="200"/>
    </location>
</feature>
<feature type="region of interest" description="Disordered" evidence="7">
    <location>
        <begin position="72"/>
        <end position="95"/>
    </location>
</feature>
<feature type="region of interest" description="SUMO1-binding" evidence="1">
    <location>
        <begin position="450"/>
        <end position="460"/>
    </location>
</feature>
<feature type="region of interest" description="Disordered" evidence="7">
    <location>
        <begin position="573"/>
        <end position="618"/>
    </location>
</feature>
<feature type="short sequence motif" description="LXXLL motif">
    <location>
        <begin position="19"/>
        <end position="23"/>
    </location>
</feature>
<feature type="binding site" evidence="5">
    <location>
        <position position="343"/>
    </location>
    <ligand>
        <name>Zn(2+)</name>
        <dbReference type="ChEBI" id="CHEBI:29105"/>
    </ligand>
</feature>
<feature type="binding site" evidence="5">
    <location>
        <position position="345"/>
    </location>
    <ligand>
        <name>Zn(2+)</name>
        <dbReference type="ChEBI" id="CHEBI:29105"/>
    </ligand>
</feature>
<feature type="binding site" evidence="5">
    <location>
        <position position="366"/>
    </location>
    <ligand>
        <name>Zn(2+)</name>
        <dbReference type="ChEBI" id="CHEBI:29105"/>
    </ligand>
</feature>
<feature type="binding site" evidence="5">
    <location>
        <position position="369"/>
    </location>
    <ligand>
        <name>Zn(2+)</name>
        <dbReference type="ChEBI" id="CHEBI:29105"/>
    </ligand>
</feature>
<feature type="cross-link" description="Glycyl lysine isopeptide (Lys-Gly) (interchain with G-Cter in SUMO2)" evidence="3">
    <location>
        <position position="46"/>
    </location>
</feature>
<feature type="cross-link" description="Glycyl lysine isopeptide (Lys-Gly) (interchain with G-Cter in SUMO2)" evidence="3">
    <location>
        <position position="56"/>
    </location>
</feature>
<feature type="cross-link" description="Glycyl lysine isopeptide (Lys-Gly) (interchain with G-Cter in SUMO2)" evidence="3">
    <location>
        <position position="230"/>
    </location>
</feature>
<feature type="cross-link" description="Glycyl lysine isopeptide (Lys-Gly) (interchain with G-Cter in SUMO2)" evidence="3">
    <location>
        <position position="307"/>
    </location>
</feature>
<feature type="cross-link" description="Glycyl lysine isopeptide (Lys-Gly) (interchain with G-Cter in SUMO2)" evidence="3">
    <location>
        <position position="466"/>
    </location>
</feature>
<feature type="cross-link" description="Glycyl lysine isopeptide (Lys-Gly) (interchain with G-Cter in SUMO2)" evidence="3">
    <location>
        <position position="482"/>
    </location>
</feature>
<organism>
    <name type="scientific">Rattus norvegicus</name>
    <name type="common">Rat</name>
    <dbReference type="NCBI Taxonomy" id="10116"/>
    <lineage>
        <taxon>Eukaryota</taxon>
        <taxon>Metazoa</taxon>
        <taxon>Chordata</taxon>
        <taxon>Craniata</taxon>
        <taxon>Vertebrata</taxon>
        <taxon>Euteleostomi</taxon>
        <taxon>Mammalia</taxon>
        <taxon>Eutheria</taxon>
        <taxon>Euarchontoglires</taxon>
        <taxon>Glires</taxon>
        <taxon>Rodentia</taxon>
        <taxon>Myomorpha</taxon>
        <taxon>Muroidea</taxon>
        <taxon>Muridae</taxon>
        <taxon>Murinae</taxon>
        <taxon>Rattus</taxon>
    </lineage>
</organism>
<accession>O70260</accession>
<gene>
    <name type="primary">Pias3</name>
</gene>
<reference key="1">
    <citation type="journal article" date="1998" name="J. Biol. Chem.">
        <title>Cloning and expression of a novel K+ channel regulatory protein, KChAP.</title>
        <authorList>
            <person name="Wible B.A."/>
            <person name="Yang Q."/>
            <person name="Kuryshev Y.A."/>
            <person name="Accili E.A."/>
            <person name="Brown A.M."/>
        </authorList>
    </citation>
    <scope>NUCLEOTIDE SEQUENCE [MRNA]</scope>
    <scope>SUBCELLULAR LOCATION</scope>
    <scope>TISSUE SPECIFICITY</scope>
    <source>
        <tissue>Brain</tissue>
    </source>
</reference>
<reference key="2">
    <citation type="journal article" date="2002" name="J. Biol. Chem.">
        <title>A new role for the STAT3 inhibitor, PIAS3: a repressor of microphthalmia transcription factor.</title>
        <authorList>
            <person name="Levy C."/>
            <person name="Nechushtan H."/>
            <person name="Razin E."/>
        </authorList>
    </citation>
    <scope>INTERACTION WITH MITF</scope>
</reference>
<reference key="3">
    <citation type="journal article" date="2002" name="Proc. Natl. Acad. Sci. U.S.A.">
        <title>The intranuclear prolactin/cyclophilin B complex as a transcriptional inducer.</title>
        <authorList>
            <person name="Rycyzyn M.A."/>
            <person name="Clevenger C.V."/>
        </authorList>
    </citation>
    <scope>INTERACTION WITH STAT5</scope>
</reference>